<name>DVL3_ARATH</name>
<protein>
    <recommendedName>
        <fullName evidence="4">Small polypeptide DEVIL 3</fullName>
    </recommendedName>
    <alternativeName>
        <fullName evidence="5">Small polypeptide ROTUNDIFOLIA LIKE 21</fullName>
        <shortName evidence="5">Small polypeptide ROT-FOUR-LIKE 21</shortName>
    </alternativeName>
</protein>
<reference key="1">
    <citation type="journal article" date="2004" name="Plant J.">
        <title>DVL, a novel class of small polypeptides: overexpression alters Arabidopsis development.</title>
        <authorList>
            <person name="Wen J."/>
            <person name="Lease K.A."/>
            <person name="Walker J.C."/>
        </authorList>
    </citation>
    <scope>NUCLEOTIDE SEQUENCE [MRNA]</scope>
    <scope>FUNCTION</scope>
    <scope>TISSUE SPECIFICITY</scope>
    <scope>GENE FAMILY</scope>
    <scope>NOMENCLATURE</scope>
    <source>
        <strain>cv. Columbia</strain>
    </source>
</reference>
<reference key="2">
    <citation type="journal article" date="2000" name="Nature">
        <title>Sequence and analysis of chromosome 1 of the plant Arabidopsis thaliana.</title>
        <authorList>
            <person name="Theologis A."/>
            <person name="Ecker J.R."/>
            <person name="Palm C.J."/>
            <person name="Federspiel N.A."/>
            <person name="Kaul S."/>
            <person name="White O."/>
            <person name="Alonso J."/>
            <person name="Altafi H."/>
            <person name="Araujo R."/>
            <person name="Bowman C.L."/>
            <person name="Brooks S.Y."/>
            <person name="Buehler E."/>
            <person name="Chan A."/>
            <person name="Chao Q."/>
            <person name="Chen H."/>
            <person name="Cheuk R.F."/>
            <person name="Chin C.W."/>
            <person name="Chung M.K."/>
            <person name="Conn L."/>
            <person name="Conway A.B."/>
            <person name="Conway A.R."/>
            <person name="Creasy T.H."/>
            <person name="Dewar K."/>
            <person name="Dunn P."/>
            <person name="Etgu P."/>
            <person name="Feldblyum T.V."/>
            <person name="Feng J.-D."/>
            <person name="Fong B."/>
            <person name="Fujii C.Y."/>
            <person name="Gill J.E."/>
            <person name="Goldsmith A.D."/>
            <person name="Haas B."/>
            <person name="Hansen N.F."/>
            <person name="Hughes B."/>
            <person name="Huizar L."/>
            <person name="Hunter J.L."/>
            <person name="Jenkins J."/>
            <person name="Johnson-Hopson C."/>
            <person name="Khan S."/>
            <person name="Khaykin E."/>
            <person name="Kim C.J."/>
            <person name="Koo H.L."/>
            <person name="Kremenetskaia I."/>
            <person name="Kurtz D.B."/>
            <person name="Kwan A."/>
            <person name="Lam B."/>
            <person name="Langin-Hooper S."/>
            <person name="Lee A."/>
            <person name="Lee J.M."/>
            <person name="Lenz C.A."/>
            <person name="Li J.H."/>
            <person name="Li Y.-P."/>
            <person name="Lin X."/>
            <person name="Liu S.X."/>
            <person name="Liu Z.A."/>
            <person name="Luros J.S."/>
            <person name="Maiti R."/>
            <person name="Marziali A."/>
            <person name="Militscher J."/>
            <person name="Miranda M."/>
            <person name="Nguyen M."/>
            <person name="Nierman W.C."/>
            <person name="Osborne B.I."/>
            <person name="Pai G."/>
            <person name="Peterson J."/>
            <person name="Pham P.K."/>
            <person name="Rizzo M."/>
            <person name="Rooney T."/>
            <person name="Rowley D."/>
            <person name="Sakano H."/>
            <person name="Salzberg S.L."/>
            <person name="Schwartz J.R."/>
            <person name="Shinn P."/>
            <person name="Southwick A.M."/>
            <person name="Sun H."/>
            <person name="Tallon L.J."/>
            <person name="Tambunga G."/>
            <person name="Toriumi M.J."/>
            <person name="Town C.D."/>
            <person name="Utterback T."/>
            <person name="Van Aken S."/>
            <person name="Vaysberg M."/>
            <person name="Vysotskaia V.S."/>
            <person name="Walker M."/>
            <person name="Wu D."/>
            <person name="Yu G."/>
            <person name="Fraser C.M."/>
            <person name="Venter J.C."/>
            <person name="Davis R.W."/>
        </authorList>
    </citation>
    <scope>NUCLEOTIDE SEQUENCE [LARGE SCALE GENOMIC DNA]</scope>
    <source>
        <strain>cv. Columbia</strain>
    </source>
</reference>
<reference key="3">
    <citation type="journal article" date="2017" name="Plant J.">
        <title>Araport11: a complete reannotation of the Arabidopsis thaliana reference genome.</title>
        <authorList>
            <person name="Cheng C.Y."/>
            <person name="Krishnakumar V."/>
            <person name="Chan A.P."/>
            <person name="Thibaud-Nissen F."/>
            <person name="Schobel S."/>
            <person name="Town C.D."/>
        </authorList>
    </citation>
    <scope>GENOME REANNOTATION</scope>
    <source>
        <strain>cv. Columbia</strain>
    </source>
</reference>
<reference key="4">
    <citation type="journal article" date="2004" name="Plant J.">
        <title>Overexpression of a novel small peptide ROTUNDIFOLIA4 decreases cell proliferation and alters leaf shape in Arabidopsis thaliana.</title>
        <authorList>
            <person name="Narita N.N."/>
            <person name="Moore S."/>
            <person name="Horiguchi G."/>
            <person name="Kubo M."/>
            <person name="Demura T."/>
            <person name="Fukuda H."/>
            <person name="Goodrich J."/>
            <person name="Tsukaya H."/>
        </authorList>
    </citation>
    <scope>GENE FAMILY</scope>
    <source>
        <strain>cv. Columbia</strain>
        <strain>cv. Landsberg erecta</strain>
    </source>
</reference>
<reference key="5">
    <citation type="journal article" date="2015" name="J. Plant Res.">
        <title>Comparative analysis of the RTFL peptide family on the control of plant organogenesis.</title>
        <authorList>
            <person name="Guo P."/>
            <person name="Yoshimura A."/>
            <person name="Ishikawa N."/>
            <person name="Yamaguchi T."/>
            <person name="Guo Y."/>
            <person name="Tsukaya H."/>
        </authorList>
    </citation>
    <scope>REVIEW</scope>
    <scope>GENE FAMILY</scope>
    <scope>NOMENCLATURE</scope>
    <source>
        <strain>cv. Columbia</strain>
    </source>
</reference>
<feature type="chain" id="PRO_0000452771" description="Small polypeptide DEVIL 3">
    <location>
        <begin position="1"/>
        <end position="40"/>
    </location>
</feature>
<feature type="transmembrane region" description="Helical" evidence="2">
    <location>
        <begin position="12"/>
        <end position="28"/>
    </location>
</feature>
<feature type="region of interest" description="Required for DVL/RTFL small polypeptide activity" evidence="1">
    <location>
        <begin position="9"/>
        <end position="40"/>
    </location>
</feature>
<accession>Q6X5U0</accession>
<organism>
    <name type="scientific">Arabidopsis thaliana</name>
    <name type="common">Mouse-ear cress</name>
    <dbReference type="NCBI Taxonomy" id="3702"/>
    <lineage>
        <taxon>Eukaryota</taxon>
        <taxon>Viridiplantae</taxon>
        <taxon>Streptophyta</taxon>
        <taxon>Embryophyta</taxon>
        <taxon>Tracheophyta</taxon>
        <taxon>Spermatophyta</taxon>
        <taxon>Magnoliopsida</taxon>
        <taxon>eudicotyledons</taxon>
        <taxon>Gunneridae</taxon>
        <taxon>Pentapetalae</taxon>
        <taxon>rosids</taxon>
        <taxon>malvids</taxon>
        <taxon>Brassicales</taxon>
        <taxon>Brassicaceae</taxon>
        <taxon>Camelineae</taxon>
        <taxon>Arabidopsis</taxon>
    </lineage>
</organism>
<dbReference type="EMBL" id="AY254319">
    <property type="protein sequence ID" value="AAP13818.1"/>
    <property type="molecule type" value="mRNA"/>
</dbReference>
<dbReference type="EMBL" id="AC002130">
    <property type="status" value="NOT_ANNOTATED_CDS"/>
    <property type="molecule type" value="Genomic_DNA"/>
</dbReference>
<dbReference type="EMBL" id="CP002684">
    <property type="protein sequence ID" value="AEE34619.1"/>
    <property type="molecule type" value="Genomic_DNA"/>
</dbReference>
<dbReference type="RefSeq" id="NP_001077782.1">
    <property type="nucleotide sequence ID" value="NM_001084313.2"/>
</dbReference>
<dbReference type="STRING" id="3702.Q6X5U0"/>
<dbReference type="PaxDb" id="3702-AT1G67265.1"/>
<dbReference type="EnsemblPlants" id="AT1G67265.1">
    <property type="protein sequence ID" value="AT1G67265.1"/>
    <property type="gene ID" value="AT1G67265"/>
</dbReference>
<dbReference type="GeneID" id="5007837"/>
<dbReference type="Gramene" id="AT1G67265.1">
    <property type="protein sequence ID" value="AT1G67265.1"/>
    <property type="gene ID" value="AT1G67265"/>
</dbReference>
<dbReference type="KEGG" id="ath:AT1G67265"/>
<dbReference type="Araport" id="AT1G67265"/>
<dbReference type="TAIR" id="AT1G67265">
    <property type="gene designation" value="RTFL21"/>
</dbReference>
<dbReference type="eggNOG" id="ENOG502SB2J">
    <property type="taxonomic scope" value="Eukaryota"/>
</dbReference>
<dbReference type="HOGENOM" id="CLU_150897_5_1_1"/>
<dbReference type="InParanoid" id="Q6X5U0"/>
<dbReference type="PhylomeDB" id="Q6X5U0"/>
<dbReference type="PRO" id="PR:Q6X5U0"/>
<dbReference type="Proteomes" id="UP000006548">
    <property type="component" value="Chromosome 1"/>
</dbReference>
<dbReference type="GO" id="GO:0005886">
    <property type="term" value="C:plasma membrane"/>
    <property type="evidence" value="ECO:0000250"/>
    <property type="project" value="UniProtKB"/>
</dbReference>
<dbReference type="GO" id="GO:0008285">
    <property type="term" value="P:negative regulation of cell population proliferation"/>
    <property type="evidence" value="ECO:0000250"/>
    <property type="project" value="UniProtKB"/>
</dbReference>
<dbReference type="GO" id="GO:0048367">
    <property type="term" value="P:shoot system development"/>
    <property type="evidence" value="ECO:0000315"/>
    <property type="project" value="TAIR"/>
</dbReference>
<dbReference type="InterPro" id="IPR012552">
    <property type="entry name" value="DVL"/>
</dbReference>
<dbReference type="InterPro" id="IPR052153">
    <property type="entry name" value="DVL/RTFL_small_peptides"/>
</dbReference>
<dbReference type="PANTHER" id="PTHR47855">
    <property type="entry name" value="OS01G0525701 PROTEIN"/>
    <property type="match status" value="1"/>
</dbReference>
<dbReference type="PANTHER" id="PTHR47855:SF3">
    <property type="entry name" value="SMALL POLYPEPTIDE DEVIL 1-RELATED"/>
    <property type="match status" value="1"/>
</dbReference>
<dbReference type="Pfam" id="PF08137">
    <property type="entry name" value="DVL"/>
    <property type="match status" value="1"/>
</dbReference>
<proteinExistence type="evidence at transcript level"/>
<gene>
    <name evidence="4" type="primary">DVL3</name>
    <name evidence="5" type="synonym">RTFL21</name>
    <name evidence="7" type="ordered locus">At1g67265</name>
    <name evidence="8" type="ORF">F1N21</name>
</gene>
<evidence type="ECO:0000250" key="1">
    <source>
        <dbReference type="UniProtKB" id="Q7XXN8"/>
    </source>
</evidence>
<evidence type="ECO:0000255" key="2"/>
<evidence type="ECO:0000269" key="3">
    <source>
    </source>
</evidence>
<evidence type="ECO:0000303" key="4">
    <source>
    </source>
</evidence>
<evidence type="ECO:0000303" key="5">
    <source>
    </source>
</evidence>
<evidence type="ECO:0000305" key="6"/>
<evidence type="ECO:0000312" key="7">
    <source>
        <dbReference type="Araport" id="AT1G67265"/>
    </source>
</evidence>
<evidence type="ECO:0000312" key="8">
    <source>
        <dbReference type="EMBL" id="AC002130"/>
    </source>
</evidence>
<keyword id="KW-1003">Cell membrane</keyword>
<keyword id="KW-0217">Developmental protein</keyword>
<keyword id="KW-0472">Membrane</keyword>
<keyword id="KW-1185">Reference proteome</keyword>
<keyword id="KW-0812">Transmembrane</keyword>
<keyword id="KW-1133">Transmembrane helix</keyword>
<sequence length="40" mass="4738">MKGTKKKTPCNKKLGGYLKEQKGRLYIIRRCVVMLICWHD</sequence>
<comment type="function">
    <text evidence="3">Small polypeptide acting as a regulatory molecule which coordinates cellular responses required for differentiation, growth and development, including leaves shape, pedicule elongation, inflorescence organization and fruit maturation, probably by restricting polar cell proliferation in lateral organs and coordinating socket cell recruitment and differentiation at trichome sites.</text>
</comment>
<comment type="subcellular location">
    <subcellularLocation>
        <location evidence="1">Cell membrane</location>
        <topology evidence="2">Single-pass membrane protein</topology>
    </subcellularLocation>
</comment>
<comment type="tissue specificity">
    <text evidence="3">Mostly expressed in flowers and stems, and, to a lower extent, in roots and leaves.</text>
</comment>
<comment type="similarity">
    <text evidence="6">Belongs to the DVL/RTFL small polypeptides family.</text>
</comment>